<keyword id="KW-0106">Calcium</keyword>
<keyword id="KW-1015">Disulfide bond</keyword>
<keyword id="KW-0378">Hydrolase</keyword>
<keyword id="KW-0442">Lipid degradation</keyword>
<keyword id="KW-0443">Lipid metabolism</keyword>
<keyword id="KW-0479">Metal-binding</keyword>
<keyword id="KW-0964">Secreted</keyword>
<keyword id="KW-0732">Signal</keyword>
<dbReference type="EC" id="3.1.1.4"/>
<dbReference type="EMBL" id="AB062439">
    <property type="protein sequence ID" value="BAB72246.1"/>
    <property type="molecule type" value="Genomic_DNA"/>
</dbReference>
<dbReference type="EMBL" id="AB037415">
    <property type="protein sequence ID" value="BAB03302.1"/>
    <property type="molecule type" value="mRNA"/>
</dbReference>
<dbReference type="EMBL" id="AB037219">
    <property type="protein sequence ID" value="BAA99510.1"/>
    <property type="molecule type" value="Genomic_DNA"/>
</dbReference>
<dbReference type="SMR" id="Q9I837"/>
<dbReference type="GO" id="GO:0005576">
    <property type="term" value="C:extracellular region"/>
    <property type="evidence" value="ECO:0007669"/>
    <property type="project" value="UniProtKB-SubCell"/>
</dbReference>
<dbReference type="GO" id="GO:0005509">
    <property type="term" value="F:calcium ion binding"/>
    <property type="evidence" value="ECO:0007669"/>
    <property type="project" value="InterPro"/>
</dbReference>
<dbReference type="GO" id="GO:0047498">
    <property type="term" value="F:calcium-dependent phospholipase A2 activity"/>
    <property type="evidence" value="ECO:0007669"/>
    <property type="project" value="TreeGrafter"/>
</dbReference>
<dbReference type="GO" id="GO:0005543">
    <property type="term" value="F:phospholipid binding"/>
    <property type="evidence" value="ECO:0007669"/>
    <property type="project" value="TreeGrafter"/>
</dbReference>
<dbReference type="GO" id="GO:0050482">
    <property type="term" value="P:arachidonate secretion"/>
    <property type="evidence" value="ECO:0007669"/>
    <property type="project" value="InterPro"/>
</dbReference>
<dbReference type="GO" id="GO:0016042">
    <property type="term" value="P:lipid catabolic process"/>
    <property type="evidence" value="ECO:0007669"/>
    <property type="project" value="UniProtKB-KW"/>
</dbReference>
<dbReference type="GO" id="GO:0006644">
    <property type="term" value="P:phospholipid metabolic process"/>
    <property type="evidence" value="ECO:0007669"/>
    <property type="project" value="InterPro"/>
</dbReference>
<dbReference type="CDD" id="cd00125">
    <property type="entry name" value="PLA2c"/>
    <property type="match status" value="1"/>
</dbReference>
<dbReference type="FunFam" id="1.20.90.10:FF:000007">
    <property type="entry name" value="Acidic phospholipase A2"/>
    <property type="match status" value="1"/>
</dbReference>
<dbReference type="Gene3D" id="1.20.90.10">
    <property type="entry name" value="Phospholipase A2 domain"/>
    <property type="match status" value="1"/>
</dbReference>
<dbReference type="InterPro" id="IPR001211">
    <property type="entry name" value="PLipase_A2"/>
</dbReference>
<dbReference type="InterPro" id="IPR033112">
    <property type="entry name" value="PLipase_A2_Asp_AS"/>
</dbReference>
<dbReference type="InterPro" id="IPR016090">
    <property type="entry name" value="PLipase_A2_dom"/>
</dbReference>
<dbReference type="InterPro" id="IPR036444">
    <property type="entry name" value="PLipase_A2_dom_sf"/>
</dbReference>
<dbReference type="InterPro" id="IPR033113">
    <property type="entry name" value="PLipase_A2_His_AS"/>
</dbReference>
<dbReference type="PANTHER" id="PTHR11716:SF106">
    <property type="entry name" value="PHOSPHOLIPASE A2 A2-ACTITOXIN-UCS2A-LIKE"/>
    <property type="match status" value="1"/>
</dbReference>
<dbReference type="PANTHER" id="PTHR11716">
    <property type="entry name" value="PHOSPHOLIPASE A2 FAMILY MEMBER"/>
    <property type="match status" value="1"/>
</dbReference>
<dbReference type="Pfam" id="PF00068">
    <property type="entry name" value="Phospholip_A2_1"/>
    <property type="match status" value="1"/>
</dbReference>
<dbReference type="PRINTS" id="PR00389">
    <property type="entry name" value="PHPHLIPASEA2"/>
</dbReference>
<dbReference type="SMART" id="SM00085">
    <property type="entry name" value="PA2c"/>
    <property type="match status" value="1"/>
</dbReference>
<dbReference type="SUPFAM" id="SSF48619">
    <property type="entry name" value="Phospholipase A2, PLA2"/>
    <property type="match status" value="1"/>
</dbReference>
<dbReference type="PROSITE" id="PS00119">
    <property type="entry name" value="PA2_ASP"/>
    <property type="match status" value="1"/>
</dbReference>
<dbReference type="PROSITE" id="PS00118">
    <property type="entry name" value="PA2_HIS"/>
    <property type="match status" value="1"/>
</dbReference>
<sequence>MYPAHLLVLLAVCVSLLGASAIPPLPLNLVQFTYLIQCANKGSRPSYHYADYGCYCGAGGSGTPVDELDRCCKIHDDCYGEAEKMGCYPKLTMYNYYCGTEGPYCNTKTDCQRYVCACDLKAAKCFARSPYNNKNYNIDTSKRCK</sequence>
<accession>Q9I837</accession>
<organism>
    <name type="scientific">Laticauda semifasciata</name>
    <name type="common">Black-banded sea krait</name>
    <name type="synonym">Pseudolaticauda semifasciata</name>
    <dbReference type="NCBI Taxonomy" id="8631"/>
    <lineage>
        <taxon>Eukaryota</taxon>
        <taxon>Metazoa</taxon>
        <taxon>Chordata</taxon>
        <taxon>Craniata</taxon>
        <taxon>Vertebrata</taxon>
        <taxon>Euteleostomi</taxon>
        <taxon>Lepidosauria</taxon>
        <taxon>Squamata</taxon>
        <taxon>Bifurcata</taxon>
        <taxon>Unidentata</taxon>
        <taxon>Episquamata</taxon>
        <taxon>Toxicofera</taxon>
        <taxon>Serpentes</taxon>
        <taxon>Colubroidea</taxon>
        <taxon>Elapidae</taxon>
        <taxon>Laticaudinae</taxon>
        <taxon>Laticauda</taxon>
    </lineage>
</organism>
<proteinExistence type="evidence at transcript level"/>
<name>PA2BG_LATSE</name>
<feature type="signal peptide" evidence="2">
    <location>
        <begin position="1"/>
        <end position="21"/>
    </location>
</feature>
<feature type="propeptide" id="PRO_0000022910" evidence="1">
    <location>
        <begin position="22"/>
        <end position="27"/>
    </location>
</feature>
<feature type="chain" id="PRO_0000022911" description="Basic phospholipase A2 GL1-1">
    <location>
        <begin position="28"/>
        <end position="145"/>
    </location>
</feature>
<feature type="active site" evidence="1">
    <location>
        <position position="75"/>
    </location>
</feature>
<feature type="active site" evidence="1">
    <location>
        <position position="119"/>
    </location>
</feature>
<feature type="binding site" evidence="1">
    <location>
        <position position="55"/>
    </location>
    <ligand>
        <name>Ca(2+)</name>
        <dbReference type="ChEBI" id="CHEBI:29108"/>
    </ligand>
</feature>
<feature type="binding site" evidence="1">
    <location>
        <position position="57"/>
    </location>
    <ligand>
        <name>Ca(2+)</name>
        <dbReference type="ChEBI" id="CHEBI:29108"/>
    </ligand>
</feature>
<feature type="binding site" evidence="1">
    <location>
        <position position="59"/>
    </location>
    <ligand>
        <name>Ca(2+)</name>
        <dbReference type="ChEBI" id="CHEBI:29108"/>
    </ligand>
</feature>
<feature type="binding site" evidence="1">
    <location>
        <position position="76"/>
    </location>
    <ligand>
        <name>Ca(2+)</name>
        <dbReference type="ChEBI" id="CHEBI:29108"/>
    </ligand>
</feature>
<feature type="disulfide bond" evidence="1">
    <location>
        <begin position="38"/>
        <end position="98"/>
    </location>
</feature>
<feature type="disulfide bond" evidence="1">
    <location>
        <begin position="54"/>
        <end position="144"/>
    </location>
</feature>
<feature type="disulfide bond" evidence="1">
    <location>
        <begin position="56"/>
        <end position="72"/>
    </location>
</feature>
<feature type="disulfide bond" evidence="1">
    <location>
        <begin position="71"/>
        <end position="125"/>
    </location>
</feature>
<feature type="disulfide bond" evidence="1">
    <location>
        <begin position="78"/>
        <end position="118"/>
    </location>
</feature>
<feature type="disulfide bond" evidence="1">
    <location>
        <begin position="87"/>
        <end position="111"/>
    </location>
</feature>
<feature type="disulfide bond" evidence="1">
    <location>
        <begin position="105"/>
        <end position="116"/>
    </location>
</feature>
<evidence type="ECO:0000250" key="1"/>
<evidence type="ECO:0000255" key="2"/>
<evidence type="ECO:0000255" key="3">
    <source>
        <dbReference type="PROSITE-ProRule" id="PRU10035"/>
    </source>
</evidence>
<evidence type="ECO:0000255" key="4">
    <source>
        <dbReference type="PROSITE-ProRule" id="PRU10036"/>
    </source>
</evidence>
<evidence type="ECO:0000305" key="5"/>
<protein>
    <recommendedName>
        <fullName>Basic phospholipase A2 GL1-1</fullName>
        <shortName>svPLA2</shortName>
        <ecNumber>3.1.1.4</ecNumber>
    </recommendedName>
    <alternativeName>
        <fullName>Phosphatidylcholine 2-acylhydrolase</fullName>
    </alternativeName>
    <alternativeName>
        <fullName>cPm09</fullName>
    </alternativeName>
</protein>
<comment type="function">
    <text evidence="1">PLA2 catalyzes the calcium-dependent hydrolysis of the 2-acyl groups in 3-sn-phosphoglycerides.</text>
</comment>
<comment type="catalytic activity">
    <reaction evidence="3 4">
        <text>a 1,2-diacyl-sn-glycero-3-phosphocholine + H2O = a 1-acyl-sn-glycero-3-phosphocholine + a fatty acid + H(+)</text>
        <dbReference type="Rhea" id="RHEA:15801"/>
        <dbReference type="ChEBI" id="CHEBI:15377"/>
        <dbReference type="ChEBI" id="CHEBI:15378"/>
        <dbReference type="ChEBI" id="CHEBI:28868"/>
        <dbReference type="ChEBI" id="CHEBI:57643"/>
        <dbReference type="ChEBI" id="CHEBI:58168"/>
        <dbReference type="EC" id="3.1.1.4"/>
    </reaction>
</comment>
<comment type="cofactor">
    <cofactor evidence="1">
        <name>Ca(2+)</name>
        <dbReference type="ChEBI" id="CHEBI:29108"/>
    </cofactor>
    <text evidence="1">Binds 1 Ca(2+) ion.</text>
</comment>
<comment type="subcellular location">
    <subcellularLocation>
        <location evidence="1">Secreted</location>
    </subcellularLocation>
</comment>
<comment type="tissue specificity">
    <text>Expressed by the venom gland.</text>
</comment>
<comment type="similarity">
    <text evidence="5">Belongs to the phospholipase A2 family. Group I subfamily. D49 sub-subfamily.</text>
</comment>
<reference key="1">
    <citation type="journal article" date="2002" name="Toxicon">
        <title>A comparative analysis of invaded sequences from group IA phospholipase A(2) genes provides evidence about the divergence period of genes groups and snake families.</title>
        <authorList>
            <person name="Fujimi T.J."/>
            <person name="Tsuchiya T."/>
            <person name="Tamiya T."/>
        </authorList>
    </citation>
    <scope>NUCLEOTIDE SEQUENCE [GENOMIC DNA]</scope>
    <source>
        <tissue>Liver</tissue>
    </source>
</reference>
<reference key="2">
    <citation type="submission" date="2000-01" db="EMBL/GenBank/DDBJ databases">
        <authorList>
            <person name="Tamiya T."/>
            <person name="Fujimi T.J."/>
        </authorList>
    </citation>
    <scope>NUCLEOTIDE SEQUENCE [MRNA]</scope>
    <source>
        <tissue>Venom gland</tissue>
    </source>
</reference>